<accession>Q2NVX8</accession>
<dbReference type="EC" id="3.6.1.41" evidence="1"/>
<dbReference type="EMBL" id="AP008232">
    <property type="protein sequence ID" value="BAE73697.1"/>
    <property type="molecule type" value="Genomic_DNA"/>
</dbReference>
<dbReference type="RefSeq" id="WP_011410285.1">
    <property type="nucleotide sequence ID" value="NC_007712.1"/>
</dbReference>
<dbReference type="SMR" id="Q2NVX8"/>
<dbReference type="STRING" id="343509.SG0422"/>
<dbReference type="KEGG" id="sgl:SG0422"/>
<dbReference type="eggNOG" id="COG0639">
    <property type="taxonomic scope" value="Bacteria"/>
</dbReference>
<dbReference type="HOGENOM" id="CLU_056184_2_0_6"/>
<dbReference type="OrthoDB" id="9807890at2"/>
<dbReference type="Proteomes" id="UP000001932">
    <property type="component" value="Chromosome"/>
</dbReference>
<dbReference type="GO" id="GO:0008803">
    <property type="term" value="F:bis(5'-nucleosyl)-tetraphosphatase (symmetrical) activity"/>
    <property type="evidence" value="ECO:0007669"/>
    <property type="project" value="UniProtKB-UniRule"/>
</dbReference>
<dbReference type="CDD" id="cd07422">
    <property type="entry name" value="MPP_ApaH"/>
    <property type="match status" value="1"/>
</dbReference>
<dbReference type="FunFam" id="3.60.21.10:FF:000013">
    <property type="entry name" value="Bis(5'-nucleosyl)-tetraphosphatase, symmetrical"/>
    <property type="match status" value="1"/>
</dbReference>
<dbReference type="Gene3D" id="3.60.21.10">
    <property type="match status" value="1"/>
</dbReference>
<dbReference type="HAMAP" id="MF_00199">
    <property type="entry name" value="ApaH"/>
    <property type="match status" value="1"/>
</dbReference>
<dbReference type="InterPro" id="IPR004617">
    <property type="entry name" value="ApaH"/>
</dbReference>
<dbReference type="InterPro" id="IPR004843">
    <property type="entry name" value="Calcineurin-like_PHP_ApaH"/>
</dbReference>
<dbReference type="InterPro" id="IPR029052">
    <property type="entry name" value="Metallo-depent_PP-like"/>
</dbReference>
<dbReference type="NCBIfam" id="TIGR00668">
    <property type="entry name" value="apaH"/>
    <property type="match status" value="1"/>
</dbReference>
<dbReference type="NCBIfam" id="NF001204">
    <property type="entry name" value="PRK00166.1"/>
    <property type="match status" value="1"/>
</dbReference>
<dbReference type="PANTHER" id="PTHR40942">
    <property type="match status" value="1"/>
</dbReference>
<dbReference type="PANTHER" id="PTHR40942:SF4">
    <property type="entry name" value="CYTOCHROME C5"/>
    <property type="match status" value="1"/>
</dbReference>
<dbReference type="Pfam" id="PF00149">
    <property type="entry name" value="Metallophos"/>
    <property type="match status" value="1"/>
</dbReference>
<dbReference type="PIRSF" id="PIRSF000903">
    <property type="entry name" value="B5n-ttraPtase_sm"/>
    <property type="match status" value="1"/>
</dbReference>
<dbReference type="SUPFAM" id="SSF56300">
    <property type="entry name" value="Metallo-dependent phosphatases"/>
    <property type="match status" value="1"/>
</dbReference>
<evidence type="ECO:0000255" key="1">
    <source>
        <dbReference type="HAMAP-Rule" id="MF_00199"/>
    </source>
</evidence>
<gene>
    <name evidence="1" type="primary">apaH</name>
    <name type="ordered locus">SG0422</name>
</gene>
<organism>
    <name type="scientific">Sodalis glossinidius (strain morsitans)</name>
    <dbReference type="NCBI Taxonomy" id="343509"/>
    <lineage>
        <taxon>Bacteria</taxon>
        <taxon>Pseudomonadati</taxon>
        <taxon>Pseudomonadota</taxon>
        <taxon>Gammaproteobacteria</taxon>
        <taxon>Enterobacterales</taxon>
        <taxon>Bruguierivoracaceae</taxon>
        <taxon>Sodalis</taxon>
    </lineage>
</organism>
<comment type="function">
    <text evidence="1">Hydrolyzes diadenosine 5',5'''-P1,P4-tetraphosphate to yield ADP.</text>
</comment>
<comment type="catalytic activity">
    <reaction evidence="1">
        <text>P(1),P(4)-bis(5'-adenosyl) tetraphosphate + H2O = 2 ADP + 2 H(+)</text>
        <dbReference type="Rhea" id="RHEA:24252"/>
        <dbReference type="ChEBI" id="CHEBI:15377"/>
        <dbReference type="ChEBI" id="CHEBI:15378"/>
        <dbReference type="ChEBI" id="CHEBI:58141"/>
        <dbReference type="ChEBI" id="CHEBI:456216"/>
        <dbReference type="EC" id="3.6.1.41"/>
    </reaction>
</comment>
<comment type="similarity">
    <text evidence="1">Belongs to the Ap4A hydrolase family.</text>
</comment>
<feature type="chain" id="PRO_1000012101" description="Bis(5'-nucleosyl)-tetraphosphatase, symmetrical">
    <location>
        <begin position="1"/>
        <end position="282"/>
    </location>
</feature>
<keyword id="KW-0378">Hydrolase</keyword>
<sequence>MSTYLIGDIHGCYDELKIILAQVRFDPAVDTLWLTGDLVARGTGSLEVLRLVRSLGDSVQLVLGNHDLHLLAVYAGISRNKPKDRITPLLEAPDADELINWLRRQPVLQVDEEKKLVMAHAGITPQWDLATARQCAREVEAVLKSDSYPLFLDAMYGDMPNNWSPELSGLARLRFSTNVFTRMRYCFPNGQLEMNCKDTPEKASTPLRPWFALPGPVSERYSIVFGHWASLMGQGTPAHIYGLDTGCCWGGELTLLRWEDKAFTRVPSNRQNETSVENPISA</sequence>
<protein>
    <recommendedName>
        <fullName evidence="1">Bis(5'-nucleosyl)-tetraphosphatase, symmetrical</fullName>
        <ecNumber evidence="1">3.6.1.41</ecNumber>
    </recommendedName>
    <alternativeName>
        <fullName evidence="1">Ap4A hydrolase</fullName>
    </alternativeName>
    <alternativeName>
        <fullName evidence="1">Diadenosine 5',5'''-P1,P4-tetraphosphate pyrophosphohydrolase</fullName>
    </alternativeName>
    <alternativeName>
        <fullName evidence="1">Diadenosine tetraphosphatase</fullName>
    </alternativeName>
</protein>
<proteinExistence type="inferred from homology"/>
<name>APAH_SODGM</name>
<reference key="1">
    <citation type="journal article" date="2006" name="Genome Res.">
        <title>Massive genome erosion and functional adaptations provide insights into the symbiotic lifestyle of Sodalis glossinidius in the tsetse host.</title>
        <authorList>
            <person name="Toh H."/>
            <person name="Weiss B.L."/>
            <person name="Perkin S.A.H."/>
            <person name="Yamashita A."/>
            <person name="Oshima K."/>
            <person name="Hattori M."/>
            <person name="Aksoy S."/>
        </authorList>
    </citation>
    <scope>NUCLEOTIDE SEQUENCE [LARGE SCALE GENOMIC DNA]</scope>
    <source>
        <strain>morsitans</strain>
    </source>
</reference>